<dbReference type="EMBL" id="CP000764">
    <property type="protein sequence ID" value="ABS20475.1"/>
    <property type="molecule type" value="Genomic_DNA"/>
</dbReference>
<dbReference type="RefSeq" id="WP_011983243.1">
    <property type="nucleotide sequence ID" value="NC_009674.1"/>
</dbReference>
<dbReference type="SMR" id="A7GK17"/>
<dbReference type="STRING" id="315749.Bcer98_0101"/>
<dbReference type="GeneID" id="33895422"/>
<dbReference type="KEGG" id="bcy:Bcer98_0101"/>
<dbReference type="eggNOG" id="COG0480">
    <property type="taxonomic scope" value="Bacteria"/>
</dbReference>
<dbReference type="HOGENOM" id="CLU_002794_4_1_9"/>
<dbReference type="OrthoDB" id="9804431at2"/>
<dbReference type="Proteomes" id="UP000002300">
    <property type="component" value="Chromosome"/>
</dbReference>
<dbReference type="GO" id="GO:0005737">
    <property type="term" value="C:cytoplasm"/>
    <property type="evidence" value="ECO:0007669"/>
    <property type="project" value="UniProtKB-SubCell"/>
</dbReference>
<dbReference type="GO" id="GO:0005525">
    <property type="term" value="F:GTP binding"/>
    <property type="evidence" value="ECO:0007669"/>
    <property type="project" value="UniProtKB-UniRule"/>
</dbReference>
<dbReference type="GO" id="GO:0003924">
    <property type="term" value="F:GTPase activity"/>
    <property type="evidence" value="ECO:0007669"/>
    <property type="project" value="InterPro"/>
</dbReference>
<dbReference type="GO" id="GO:0003746">
    <property type="term" value="F:translation elongation factor activity"/>
    <property type="evidence" value="ECO:0007669"/>
    <property type="project" value="UniProtKB-UniRule"/>
</dbReference>
<dbReference type="GO" id="GO:0032790">
    <property type="term" value="P:ribosome disassembly"/>
    <property type="evidence" value="ECO:0007669"/>
    <property type="project" value="TreeGrafter"/>
</dbReference>
<dbReference type="CDD" id="cd01886">
    <property type="entry name" value="EF-G"/>
    <property type="match status" value="1"/>
</dbReference>
<dbReference type="CDD" id="cd16262">
    <property type="entry name" value="EFG_III"/>
    <property type="match status" value="1"/>
</dbReference>
<dbReference type="CDD" id="cd01434">
    <property type="entry name" value="EFG_mtEFG1_IV"/>
    <property type="match status" value="1"/>
</dbReference>
<dbReference type="CDD" id="cd03713">
    <property type="entry name" value="EFG_mtEFG_C"/>
    <property type="match status" value="1"/>
</dbReference>
<dbReference type="CDD" id="cd04088">
    <property type="entry name" value="EFG_mtEFG_II"/>
    <property type="match status" value="1"/>
</dbReference>
<dbReference type="FunFam" id="2.40.30.10:FF:000006">
    <property type="entry name" value="Elongation factor G"/>
    <property type="match status" value="1"/>
</dbReference>
<dbReference type="FunFam" id="3.30.230.10:FF:000003">
    <property type="entry name" value="Elongation factor G"/>
    <property type="match status" value="1"/>
</dbReference>
<dbReference type="FunFam" id="3.30.70.240:FF:000001">
    <property type="entry name" value="Elongation factor G"/>
    <property type="match status" value="1"/>
</dbReference>
<dbReference type="FunFam" id="3.30.70.870:FF:000001">
    <property type="entry name" value="Elongation factor G"/>
    <property type="match status" value="1"/>
</dbReference>
<dbReference type="FunFam" id="3.40.50.300:FF:000029">
    <property type="entry name" value="Elongation factor G"/>
    <property type="match status" value="1"/>
</dbReference>
<dbReference type="Gene3D" id="3.30.230.10">
    <property type="match status" value="1"/>
</dbReference>
<dbReference type="Gene3D" id="3.30.70.240">
    <property type="match status" value="1"/>
</dbReference>
<dbReference type="Gene3D" id="3.30.70.870">
    <property type="entry name" value="Elongation Factor G (Translational Gtpase), domain 3"/>
    <property type="match status" value="1"/>
</dbReference>
<dbReference type="Gene3D" id="3.40.50.300">
    <property type="entry name" value="P-loop containing nucleotide triphosphate hydrolases"/>
    <property type="match status" value="1"/>
</dbReference>
<dbReference type="Gene3D" id="2.40.30.10">
    <property type="entry name" value="Translation factors"/>
    <property type="match status" value="1"/>
</dbReference>
<dbReference type="HAMAP" id="MF_00054_B">
    <property type="entry name" value="EF_G_EF_2_B"/>
    <property type="match status" value="1"/>
</dbReference>
<dbReference type="InterPro" id="IPR041095">
    <property type="entry name" value="EFG_II"/>
</dbReference>
<dbReference type="InterPro" id="IPR009022">
    <property type="entry name" value="EFG_III"/>
</dbReference>
<dbReference type="InterPro" id="IPR035647">
    <property type="entry name" value="EFG_III/V"/>
</dbReference>
<dbReference type="InterPro" id="IPR047872">
    <property type="entry name" value="EFG_IV"/>
</dbReference>
<dbReference type="InterPro" id="IPR035649">
    <property type="entry name" value="EFG_V"/>
</dbReference>
<dbReference type="InterPro" id="IPR000640">
    <property type="entry name" value="EFG_V-like"/>
</dbReference>
<dbReference type="InterPro" id="IPR004161">
    <property type="entry name" value="EFTu-like_2"/>
</dbReference>
<dbReference type="InterPro" id="IPR031157">
    <property type="entry name" value="G_TR_CS"/>
</dbReference>
<dbReference type="InterPro" id="IPR027417">
    <property type="entry name" value="P-loop_NTPase"/>
</dbReference>
<dbReference type="InterPro" id="IPR020568">
    <property type="entry name" value="Ribosomal_Su5_D2-typ_SF"/>
</dbReference>
<dbReference type="InterPro" id="IPR014721">
    <property type="entry name" value="Ribsml_uS5_D2-typ_fold_subgr"/>
</dbReference>
<dbReference type="InterPro" id="IPR005225">
    <property type="entry name" value="Small_GTP-bd"/>
</dbReference>
<dbReference type="InterPro" id="IPR000795">
    <property type="entry name" value="T_Tr_GTP-bd_dom"/>
</dbReference>
<dbReference type="InterPro" id="IPR009000">
    <property type="entry name" value="Transl_B-barrel_sf"/>
</dbReference>
<dbReference type="InterPro" id="IPR004540">
    <property type="entry name" value="Transl_elong_EFG/EF2"/>
</dbReference>
<dbReference type="InterPro" id="IPR005517">
    <property type="entry name" value="Transl_elong_EFG/EF2_IV"/>
</dbReference>
<dbReference type="NCBIfam" id="TIGR00484">
    <property type="entry name" value="EF-G"/>
    <property type="match status" value="1"/>
</dbReference>
<dbReference type="NCBIfam" id="NF009379">
    <property type="entry name" value="PRK12740.1-3"/>
    <property type="match status" value="1"/>
</dbReference>
<dbReference type="NCBIfam" id="NF009381">
    <property type="entry name" value="PRK12740.1-5"/>
    <property type="match status" value="1"/>
</dbReference>
<dbReference type="NCBIfam" id="NF009891">
    <property type="entry name" value="PRK13351.1-1"/>
    <property type="match status" value="1"/>
</dbReference>
<dbReference type="NCBIfam" id="TIGR00231">
    <property type="entry name" value="small_GTP"/>
    <property type="match status" value="1"/>
</dbReference>
<dbReference type="PANTHER" id="PTHR43261:SF1">
    <property type="entry name" value="RIBOSOME-RELEASING FACTOR 2, MITOCHONDRIAL"/>
    <property type="match status" value="1"/>
</dbReference>
<dbReference type="PANTHER" id="PTHR43261">
    <property type="entry name" value="TRANSLATION ELONGATION FACTOR G-RELATED"/>
    <property type="match status" value="1"/>
</dbReference>
<dbReference type="Pfam" id="PF00679">
    <property type="entry name" value="EFG_C"/>
    <property type="match status" value="1"/>
</dbReference>
<dbReference type="Pfam" id="PF14492">
    <property type="entry name" value="EFG_III"/>
    <property type="match status" value="1"/>
</dbReference>
<dbReference type="Pfam" id="PF03764">
    <property type="entry name" value="EFG_IV"/>
    <property type="match status" value="1"/>
</dbReference>
<dbReference type="Pfam" id="PF00009">
    <property type="entry name" value="GTP_EFTU"/>
    <property type="match status" value="1"/>
</dbReference>
<dbReference type="Pfam" id="PF03144">
    <property type="entry name" value="GTP_EFTU_D2"/>
    <property type="match status" value="1"/>
</dbReference>
<dbReference type="PRINTS" id="PR00315">
    <property type="entry name" value="ELONGATNFCT"/>
</dbReference>
<dbReference type="SMART" id="SM00838">
    <property type="entry name" value="EFG_C"/>
    <property type="match status" value="1"/>
</dbReference>
<dbReference type="SMART" id="SM00889">
    <property type="entry name" value="EFG_IV"/>
    <property type="match status" value="1"/>
</dbReference>
<dbReference type="SUPFAM" id="SSF54980">
    <property type="entry name" value="EF-G C-terminal domain-like"/>
    <property type="match status" value="2"/>
</dbReference>
<dbReference type="SUPFAM" id="SSF52540">
    <property type="entry name" value="P-loop containing nucleoside triphosphate hydrolases"/>
    <property type="match status" value="1"/>
</dbReference>
<dbReference type="SUPFAM" id="SSF54211">
    <property type="entry name" value="Ribosomal protein S5 domain 2-like"/>
    <property type="match status" value="1"/>
</dbReference>
<dbReference type="SUPFAM" id="SSF50447">
    <property type="entry name" value="Translation proteins"/>
    <property type="match status" value="1"/>
</dbReference>
<dbReference type="PROSITE" id="PS00301">
    <property type="entry name" value="G_TR_1"/>
    <property type="match status" value="1"/>
</dbReference>
<dbReference type="PROSITE" id="PS51722">
    <property type="entry name" value="G_TR_2"/>
    <property type="match status" value="1"/>
</dbReference>
<accession>A7GK17</accession>
<evidence type="ECO:0000255" key="1">
    <source>
        <dbReference type="HAMAP-Rule" id="MF_00054"/>
    </source>
</evidence>
<proteinExistence type="inferred from homology"/>
<gene>
    <name evidence="1" type="primary">fusA</name>
    <name type="ordered locus">Bcer98_0101</name>
</gene>
<name>EFG_BACCN</name>
<organism>
    <name type="scientific">Bacillus cytotoxicus (strain DSM 22905 / CIP 110041 / 391-98 / NVH 391-98)</name>
    <dbReference type="NCBI Taxonomy" id="315749"/>
    <lineage>
        <taxon>Bacteria</taxon>
        <taxon>Bacillati</taxon>
        <taxon>Bacillota</taxon>
        <taxon>Bacilli</taxon>
        <taxon>Bacillales</taxon>
        <taxon>Bacillaceae</taxon>
        <taxon>Bacillus</taxon>
        <taxon>Bacillus cereus group</taxon>
    </lineage>
</organism>
<reference key="1">
    <citation type="journal article" date="2008" name="Chem. Biol. Interact.">
        <title>Extending the Bacillus cereus group genomics to putative food-borne pathogens of different toxicity.</title>
        <authorList>
            <person name="Lapidus A."/>
            <person name="Goltsman E."/>
            <person name="Auger S."/>
            <person name="Galleron N."/>
            <person name="Segurens B."/>
            <person name="Dossat C."/>
            <person name="Land M.L."/>
            <person name="Broussolle V."/>
            <person name="Brillard J."/>
            <person name="Guinebretiere M.-H."/>
            <person name="Sanchis V."/>
            <person name="Nguen-the C."/>
            <person name="Lereclus D."/>
            <person name="Richardson P."/>
            <person name="Wincker P."/>
            <person name="Weissenbach J."/>
            <person name="Ehrlich S.D."/>
            <person name="Sorokin A."/>
        </authorList>
    </citation>
    <scope>NUCLEOTIDE SEQUENCE [LARGE SCALE GENOMIC DNA]</scope>
    <source>
        <strain>DSM 22905 / CIP 110041 / 391-98 / NVH 391-98</strain>
    </source>
</reference>
<feature type="chain" id="PRO_1000074946" description="Elongation factor G">
    <location>
        <begin position="1"/>
        <end position="692"/>
    </location>
</feature>
<feature type="domain" description="tr-type G">
    <location>
        <begin position="8"/>
        <end position="282"/>
    </location>
</feature>
<feature type="binding site" evidence="1">
    <location>
        <begin position="17"/>
        <end position="24"/>
    </location>
    <ligand>
        <name>GTP</name>
        <dbReference type="ChEBI" id="CHEBI:37565"/>
    </ligand>
</feature>
<feature type="binding site" evidence="1">
    <location>
        <begin position="81"/>
        <end position="85"/>
    </location>
    <ligand>
        <name>GTP</name>
        <dbReference type="ChEBI" id="CHEBI:37565"/>
    </ligand>
</feature>
<feature type="binding site" evidence="1">
    <location>
        <begin position="135"/>
        <end position="138"/>
    </location>
    <ligand>
        <name>GTP</name>
        <dbReference type="ChEBI" id="CHEBI:37565"/>
    </ligand>
</feature>
<sequence length="692" mass="76483">MTREFSLENTRNIGIMAHIDAGKTTATERILYYTGRIHKIGETHEGASQMDWMEQEQERGITITSAATTAQWKGHRVNIIDTPGHVDFTVEVERSLRVLDGAVAVLDAQSGVEPQTETVWRQATTYGVPRIVFVNKMDKIGADFLYSVGTLHDRLQANAHPLQLPIGAEDEFNGIIDLVEECAYMYANDLGTDIERIEIPEEHQELAAEYRGKLIEAVAELDEELMMKYLEGEEISKEELKAAIRKATTSVEFFPVICGSAFKNKGVQLMLDAVIDYLPSPLDVPAIKGIVPDTDEEVERHSSDEEPFSALAFKIMTDPYVGKLTFFRVYSGTLNSGSYVKNSTKGKRERVGRILQMHANSREEISTVYAGDIAAAVGLKDTTTGDTLCDEKNLVILESMEFPEPVISVAIEPKSKADQDKMGTALAKLSEEDPTFRAHTDQETGQTIIAGMGELHLDIIVDRLRREFKVEANVGAPQVAYRETFRAAAKVEGKFARQSGGRGQFGHVWIEFEPNEEGKGFEFENKIVGGVVPREYIPAVQAGLEDALQNGVLAGYPVIDVKAALVDGSYHDVDSSEMAFKIAASMALKAAVSKCNPVILEPMMKVEVVIPEEYMGDIMGDVTSRRGRVEGMEARGNAQVVRAMVPLSEMFGYATALRSNTQGRGTFSMVFDHYEEVPRSISEEIIKKNKGE</sequence>
<comment type="function">
    <text evidence="1">Catalyzes the GTP-dependent ribosomal translocation step during translation elongation. During this step, the ribosome changes from the pre-translocational (PRE) to the post-translocational (POST) state as the newly formed A-site-bound peptidyl-tRNA and P-site-bound deacylated tRNA move to the P and E sites, respectively. Catalyzes the coordinated movement of the two tRNA molecules, the mRNA and conformational changes in the ribosome.</text>
</comment>
<comment type="subcellular location">
    <subcellularLocation>
        <location evidence="1">Cytoplasm</location>
    </subcellularLocation>
</comment>
<comment type="similarity">
    <text evidence="1">Belongs to the TRAFAC class translation factor GTPase superfamily. Classic translation factor GTPase family. EF-G/EF-2 subfamily.</text>
</comment>
<keyword id="KW-0963">Cytoplasm</keyword>
<keyword id="KW-0251">Elongation factor</keyword>
<keyword id="KW-0342">GTP-binding</keyword>
<keyword id="KW-0547">Nucleotide-binding</keyword>
<keyword id="KW-0648">Protein biosynthesis</keyword>
<protein>
    <recommendedName>
        <fullName evidence="1">Elongation factor G</fullName>
        <shortName evidence="1">EF-G</shortName>
    </recommendedName>
</protein>